<organism>
    <name type="scientific">Ectopseudomonas mendocina (strain ymp)</name>
    <name type="common">Pseudomonas mendocina</name>
    <dbReference type="NCBI Taxonomy" id="399739"/>
    <lineage>
        <taxon>Bacteria</taxon>
        <taxon>Pseudomonadati</taxon>
        <taxon>Pseudomonadota</taxon>
        <taxon>Gammaproteobacteria</taxon>
        <taxon>Pseudomonadales</taxon>
        <taxon>Pseudomonadaceae</taxon>
        <taxon>Ectopseudomonas</taxon>
    </lineage>
</organism>
<sequence length="376" mass="41895">MANSWRISALRERHLALGSQLEDWNGMGTAWTYASDLADHHEAIRTRAGLMDVSGLKKVHYVGPHAESLLDYATTRDIGKLYPGKSVYACLLDEDGKFIDDCIVYRTGPNAFMVVHGAGTGHEMLIRSAQGRQVAVLFDDDLHDLSLQGPRAVDFLAEHVPGIRDLPYFHHLQTKLFDRPVMISRTGYTGERGYEIFCKAADAPAIWDAILEQGKGYGIIPCAFTALDWLRVESYLLFFPYDNSQMYPFADQKAGDTLWELGLDFTVSPGKQDFRGAGEHYRLKGQERFKIFGVLLDGHQAAQGGDTLWHDGRQVGVITCSMYSRLTERSMAIARVEPQIAEQGVPLQVRGSLDCAAIAHSLPFDDPEKKKRTAKG</sequence>
<reference key="1">
    <citation type="submission" date="2007-04" db="EMBL/GenBank/DDBJ databases">
        <title>Complete sequence of Pseudomonas mendocina ymp.</title>
        <authorList>
            <consortium name="US DOE Joint Genome Institute"/>
            <person name="Copeland A."/>
            <person name="Lucas S."/>
            <person name="Lapidus A."/>
            <person name="Barry K."/>
            <person name="Glavina del Rio T."/>
            <person name="Dalin E."/>
            <person name="Tice H."/>
            <person name="Pitluck S."/>
            <person name="Kiss H."/>
            <person name="Brettin T."/>
            <person name="Detter J.C."/>
            <person name="Bruce D."/>
            <person name="Han C."/>
            <person name="Schmutz J."/>
            <person name="Larimer F."/>
            <person name="Land M."/>
            <person name="Hauser L."/>
            <person name="Kyrpides N."/>
            <person name="Mikhailova N."/>
            <person name="Hersman L."/>
            <person name="Dubois J."/>
            <person name="Maurice P."/>
            <person name="Richardson P."/>
        </authorList>
    </citation>
    <scope>NUCLEOTIDE SEQUENCE [LARGE SCALE GENOMIC DNA]</scope>
    <source>
        <strain>ymp</strain>
    </source>
</reference>
<reference key="2">
    <citation type="journal article" date="2016" name="Nature">
        <title>An oxidative N-demethylase reveals PAS transition from ubiquitous sensor to enzyme.</title>
        <authorList>
            <person name="Ortmayer M."/>
            <person name="Lafite P."/>
            <person name="Menon B.R."/>
            <person name="Tralau T."/>
            <person name="Fisher K."/>
            <person name="Denkhaus L."/>
            <person name="Scrutton N.S."/>
            <person name="Rigby S.E."/>
            <person name="Munro A.W."/>
            <person name="Hay S."/>
            <person name="Leys D."/>
        </authorList>
    </citation>
    <scope>FUNCTION</scope>
    <scope>SUBUNIT</scope>
</reference>
<keyword id="KW-0032">Aminotransferase</keyword>
<keyword id="KW-0808">Transferase</keyword>
<name>HODMG_ECTM1</name>
<proteinExistence type="evidence at protein level"/>
<feature type="chain" id="PRO_0000461801" description="Heme-dependent oxidative N-demethylase gamma subunit">
    <location>
        <begin position="1"/>
        <end position="376"/>
    </location>
</feature>
<protein>
    <recommendedName>
        <fullName evidence="2">Heme-dependent oxidative N-demethylase gamma subunit</fullName>
        <shortName evidence="2">HODM gamma subunit</shortName>
        <ecNumber evidence="3">2.1.2.-</ecNumber>
    </recommendedName>
</protein>
<evidence type="ECO:0000269" key="1">
    <source>
    </source>
</evidence>
<evidence type="ECO:0000303" key="2">
    <source>
    </source>
</evidence>
<evidence type="ECO:0000305" key="3">
    <source>
    </source>
</evidence>
<evidence type="ECO:0000312" key="4">
    <source>
        <dbReference type="EMBL" id="ABP86206.1"/>
    </source>
</evidence>
<comment type="function">
    <text evidence="1">Component of the heme-dependent oxidative N-demethylase (HODM) enzyme, that catalyzes the NADPH-dependent oxidation of dimethylamine (DMA) to methylamine (MA) and formaldehyde. Functions in bacterial methylated amine catabolism, linking alkylamine oxidation to the tetrahydrofolate C1 pool. The gamma subunit of HODM may act as an aminomethyltransferase involved in the detoxification of formaldehyde released by the alpha subunit; this process requires tetrahydrofolate (THF).</text>
</comment>
<comment type="subunit">
    <text evidence="1">The heme-dependent oxidative N-demethylase (HODM) is a heterotetramer composed of a catalytic alpha subunit, a FMN/2Fe-2S-dependent oxidoreductase beta subunit, a gamma subunit with putative aminotransferase activity, and a delta subunit of unknown function.</text>
</comment>
<dbReference type="EC" id="2.1.2.-" evidence="3"/>
<dbReference type="EMBL" id="CP000680">
    <property type="protein sequence ID" value="ABP86206.1"/>
    <property type="molecule type" value="Genomic_DNA"/>
</dbReference>
<dbReference type="STRING" id="399739.Pmen_3456"/>
<dbReference type="KEGG" id="pmy:Pmen_3456"/>
<dbReference type="eggNOG" id="COG0404">
    <property type="taxonomic scope" value="Bacteria"/>
</dbReference>
<dbReference type="HOGENOM" id="CLU_007884_10_2_6"/>
<dbReference type="OrthoDB" id="9774591at2"/>
<dbReference type="GO" id="GO:0005829">
    <property type="term" value="C:cytosol"/>
    <property type="evidence" value="ECO:0007669"/>
    <property type="project" value="TreeGrafter"/>
</dbReference>
<dbReference type="GO" id="GO:0008483">
    <property type="term" value="F:transaminase activity"/>
    <property type="evidence" value="ECO:0007669"/>
    <property type="project" value="UniProtKB-KW"/>
</dbReference>
<dbReference type="Gene3D" id="3.30.1360.120">
    <property type="entry name" value="Probable tRNA modification gtpase trme, domain 1"/>
    <property type="match status" value="1"/>
</dbReference>
<dbReference type="InterPro" id="IPR013977">
    <property type="entry name" value="GCST_C"/>
</dbReference>
<dbReference type="InterPro" id="IPR006222">
    <property type="entry name" value="GCV_T_N"/>
</dbReference>
<dbReference type="InterPro" id="IPR028896">
    <property type="entry name" value="GcvT/YgfZ/DmdA"/>
</dbReference>
<dbReference type="InterPro" id="IPR029043">
    <property type="entry name" value="GcvT/YgfZ_C"/>
</dbReference>
<dbReference type="InterPro" id="IPR027266">
    <property type="entry name" value="TrmE/GcvT_dom1"/>
</dbReference>
<dbReference type="PANTHER" id="PTHR43757">
    <property type="entry name" value="AMINOMETHYLTRANSFERASE"/>
    <property type="match status" value="1"/>
</dbReference>
<dbReference type="PANTHER" id="PTHR43757:SF2">
    <property type="entry name" value="AMINOMETHYLTRANSFERASE, MITOCHONDRIAL"/>
    <property type="match status" value="1"/>
</dbReference>
<dbReference type="Pfam" id="PF01571">
    <property type="entry name" value="GCV_T"/>
    <property type="match status" value="1"/>
</dbReference>
<dbReference type="Pfam" id="PF08669">
    <property type="entry name" value="GCV_T_C"/>
    <property type="match status" value="1"/>
</dbReference>
<dbReference type="PIRSF" id="PIRSF006487">
    <property type="entry name" value="GcvT"/>
    <property type="match status" value="1"/>
</dbReference>
<dbReference type="SUPFAM" id="SSF101790">
    <property type="entry name" value="Aminomethyltransferase beta-barrel domain"/>
    <property type="match status" value="1"/>
</dbReference>
<dbReference type="SUPFAM" id="SSF103025">
    <property type="entry name" value="Folate-binding domain"/>
    <property type="match status" value="1"/>
</dbReference>
<gene>
    <name evidence="4" type="ordered locus">Pmen_3456</name>
</gene>
<accession>A4XXZ0</accession>